<name>CWC15_DEBHA</name>
<accession>Q6BP48</accession>
<accession>B5RU25</accession>
<feature type="chain" id="PRO_0000218239" description="Pre-mRNA-splicing factor CWC15">
    <location>
        <begin position="1"/>
        <end position="226"/>
    </location>
</feature>
<feature type="region of interest" description="Disordered" evidence="3">
    <location>
        <begin position="1"/>
        <end position="31"/>
    </location>
</feature>
<feature type="region of interest" description="Disordered" evidence="3">
    <location>
        <begin position="78"/>
        <end position="134"/>
    </location>
</feature>
<feature type="coiled-coil region" evidence="2">
    <location>
        <begin position="126"/>
        <end position="167"/>
    </location>
</feature>
<feature type="compositionally biased region" description="Basic and acidic residues" evidence="3">
    <location>
        <begin position="7"/>
        <end position="16"/>
    </location>
</feature>
<feature type="compositionally biased region" description="Polar residues" evidence="3">
    <location>
        <begin position="18"/>
        <end position="31"/>
    </location>
</feature>
<feature type="compositionally biased region" description="Basic and acidic residues" evidence="3">
    <location>
        <begin position="78"/>
        <end position="92"/>
    </location>
</feature>
<feature type="compositionally biased region" description="Basic and acidic residues" evidence="3">
    <location>
        <begin position="102"/>
        <end position="118"/>
    </location>
</feature>
<feature type="compositionally biased region" description="Acidic residues" evidence="3">
    <location>
        <begin position="119"/>
        <end position="133"/>
    </location>
</feature>
<protein>
    <recommendedName>
        <fullName>Pre-mRNA-splicing factor CWC15</fullName>
    </recommendedName>
</protein>
<evidence type="ECO:0000250" key="1"/>
<evidence type="ECO:0000255" key="2"/>
<evidence type="ECO:0000256" key="3">
    <source>
        <dbReference type="SAM" id="MobiDB-lite"/>
    </source>
</evidence>
<evidence type="ECO:0000305" key="4"/>
<dbReference type="EMBL" id="CR382137">
    <property type="protein sequence ID" value="CAR65837.1"/>
    <property type="molecule type" value="Genomic_DNA"/>
</dbReference>
<dbReference type="RefSeq" id="XP_002770494.1">
    <property type="nucleotide sequence ID" value="XM_002770448.1"/>
</dbReference>
<dbReference type="SMR" id="Q6BP48"/>
<dbReference type="FunCoup" id="Q6BP48">
    <property type="interactions" value="160"/>
</dbReference>
<dbReference type="STRING" id="284592.Q6BP48"/>
<dbReference type="GeneID" id="8998770"/>
<dbReference type="KEGG" id="dha:DEHA2E16566g"/>
<dbReference type="VEuPathDB" id="FungiDB:DEHA2E16566g"/>
<dbReference type="eggNOG" id="KOG3228">
    <property type="taxonomic scope" value="Eukaryota"/>
</dbReference>
<dbReference type="HOGENOM" id="CLU_068312_1_0_1"/>
<dbReference type="InParanoid" id="Q6BP48"/>
<dbReference type="OMA" id="KYREHGQ"/>
<dbReference type="OrthoDB" id="30179at2759"/>
<dbReference type="Proteomes" id="UP000000599">
    <property type="component" value="Chromosome E"/>
</dbReference>
<dbReference type="GO" id="GO:0071013">
    <property type="term" value="C:catalytic step 2 spliceosome"/>
    <property type="evidence" value="ECO:0007669"/>
    <property type="project" value="TreeGrafter"/>
</dbReference>
<dbReference type="GO" id="GO:0005634">
    <property type="term" value="C:nucleus"/>
    <property type="evidence" value="ECO:0000250"/>
    <property type="project" value="UniProtKB"/>
</dbReference>
<dbReference type="GO" id="GO:0003723">
    <property type="term" value="F:RNA binding"/>
    <property type="evidence" value="ECO:0000250"/>
    <property type="project" value="UniProtKB"/>
</dbReference>
<dbReference type="GO" id="GO:0045292">
    <property type="term" value="P:mRNA cis splicing, via spliceosome"/>
    <property type="evidence" value="ECO:0007669"/>
    <property type="project" value="TreeGrafter"/>
</dbReference>
<dbReference type="GO" id="GO:0000398">
    <property type="term" value="P:mRNA splicing, via spliceosome"/>
    <property type="evidence" value="ECO:0000250"/>
    <property type="project" value="UniProtKB"/>
</dbReference>
<dbReference type="InterPro" id="IPR006973">
    <property type="entry name" value="Cwf_Cwc_15"/>
</dbReference>
<dbReference type="PANTHER" id="PTHR12718">
    <property type="entry name" value="CELL CYCLE CONTROL PROTEIN CWF15"/>
    <property type="match status" value="1"/>
</dbReference>
<dbReference type="PANTHER" id="PTHR12718:SF2">
    <property type="entry name" value="SPLICEOSOME-ASSOCIATED PROTEIN CWC15 HOMOLOG"/>
    <property type="match status" value="1"/>
</dbReference>
<dbReference type="Pfam" id="PF04889">
    <property type="entry name" value="Cwf_Cwc_15"/>
    <property type="match status" value="1"/>
</dbReference>
<sequence>MTTNHRPTLESKRGKAESISNTIFHSRSLPQHTSLKYRGDIRKPKVDTKIGKQAVEELKKDLLLNEGKLEDSLKINKSLTDGDHSMDEHISKTIDNQEDERDYNRQEYDERSIGKEEYSGSEDDSGDDSEDETAQLMEELAKIKKERQEEQEKLELQNKLDKTKVSNPLVQVVGASTEANFKIKKSWRDSTAFKKQNSQNKNDDETFTNDTLNSEFHQNFLTKYIR</sequence>
<keyword id="KW-0175">Coiled coil</keyword>
<keyword id="KW-0507">mRNA processing</keyword>
<keyword id="KW-0508">mRNA splicing</keyword>
<keyword id="KW-0539">Nucleus</keyword>
<keyword id="KW-1185">Reference proteome</keyword>
<keyword id="KW-0747">Spliceosome</keyword>
<comment type="function">
    <text evidence="1">Involved in pre-mRNA splicing.</text>
</comment>
<comment type="subunit">
    <text evidence="1">Associated with the spliceosome.</text>
</comment>
<comment type="subcellular location">
    <subcellularLocation>
        <location evidence="4">Nucleus</location>
    </subcellularLocation>
</comment>
<comment type="similarity">
    <text evidence="4">Belongs to the CWC15 family.</text>
</comment>
<proteinExistence type="inferred from homology"/>
<organism>
    <name type="scientific">Debaryomyces hansenii (strain ATCC 36239 / CBS 767 / BCRC 21394 / JCM 1990 / NBRC 0083 / IGC 2968)</name>
    <name type="common">Yeast</name>
    <name type="synonym">Torulaspora hansenii</name>
    <dbReference type="NCBI Taxonomy" id="284592"/>
    <lineage>
        <taxon>Eukaryota</taxon>
        <taxon>Fungi</taxon>
        <taxon>Dikarya</taxon>
        <taxon>Ascomycota</taxon>
        <taxon>Saccharomycotina</taxon>
        <taxon>Pichiomycetes</taxon>
        <taxon>Debaryomycetaceae</taxon>
        <taxon>Debaryomyces</taxon>
    </lineage>
</organism>
<gene>
    <name type="primary">CWC15</name>
    <name type="ordered locus">DEHA2E16566g</name>
</gene>
<reference key="1">
    <citation type="journal article" date="2004" name="Nature">
        <title>Genome evolution in yeasts.</title>
        <authorList>
            <person name="Dujon B."/>
            <person name="Sherman D."/>
            <person name="Fischer G."/>
            <person name="Durrens P."/>
            <person name="Casaregola S."/>
            <person name="Lafontaine I."/>
            <person name="de Montigny J."/>
            <person name="Marck C."/>
            <person name="Neuveglise C."/>
            <person name="Talla E."/>
            <person name="Goffard N."/>
            <person name="Frangeul L."/>
            <person name="Aigle M."/>
            <person name="Anthouard V."/>
            <person name="Babour A."/>
            <person name="Barbe V."/>
            <person name="Barnay S."/>
            <person name="Blanchin S."/>
            <person name="Beckerich J.-M."/>
            <person name="Beyne E."/>
            <person name="Bleykasten C."/>
            <person name="Boisrame A."/>
            <person name="Boyer J."/>
            <person name="Cattolico L."/>
            <person name="Confanioleri F."/>
            <person name="de Daruvar A."/>
            <person name="Despons L."/>
            <person name="Fabre E."/>
            <person name="Fairhead C."/>
            <person name="Ferry-Dumazet H."/>
            <person name="Groppi A."/>
            <person name="Hantraye F."/>
            <person name="Hennequin C."/>
            <person name="Jauniaux N."/>
            <person name="Joyet P."/>
            <person name="Kachouri R."/>
            <person name="Kerrest A."/>
            <person name="Koszul R."/>
            <person name="Lemaire M."/>
            <person name="Lesur I."/>
            <person name="Ma L."/>
            <person name="Muller H."/>
            <person name="Nicaud J.-M."/>
            <person name="Nikolski M."/>
            <person name="Oztas S."/>
            <person name="Ozier-Kalogeropoulos O."/>
            <person name="Pellenz S."/>
            <person name="Potier S."/>
            <person name="Richard G.-F."/>
            <person name="Straub M.-L."/>
            <person name="Suleau A."/>
            <person name="Swennen D."/>
            <person name="Tekaia F."/>
            <person name="Wesolowski-Louvel M."/>
            <person name="Westhof E."/>
            <person name="Wirth B."/>
            <person name="Zeniou-Meyer M."/>
            <person name="Zivanovic Y."/>
            <person name="Bolotin-Fukuhara M."/>
            <person name="Thierry A."/>
            <person name="Bouchier C."/>
            <person name="Caudron B."/>
            <person name="Scarpelli C."/>
            <person name="Gaillardin C."/>
            <person name="Weissenbach J."/>
            <person name="Wincker P."/>
            <person name="Souciet J.-L."/>
        </authorList>
    </citation>
    <scope>NUCLEOTIDE SEQUENCE [LARGE SCALE GENOMIC DNA]</scope>
    <source>
        <strain>ATCC 36239 / CBS 767 / BCRC 21394 / JCM 1990 / NBRC 0083 / IGC 2968</strain>
    </source>
</reference>